<evidence type="ECO:0000256" key="1">
    <source>
        <dbReference type="SAM" id="MobiDB-lite"/>
    </source>
</evidence>
<evidence type="ECO:0000305" key="2"/>
<sequence>MCWGKHWPRPEGRNLACSKGSPGWRTAGQGSGSYGAATLGKGTEQRGVGALRRGLLSFTCFCLSNWTSGAGFSEMGRSRFEEGRLGYSSDVLSARPTMSPTEMLRSRALNLGAATVLRRHRAPQGTSSYQEGRRAHEATSAESDDDNGVQVLASLAVSCAQHSRHKDPVGTQLQQACAQVPTSRAPLWPCPSHRLMHSTDGPLDPEPLSTLLPAA</sequence>
<accession>Q6ZWC4</accession>
<dbReference type="EMBL" id="AK123323">
    <property type="status" value="NOT_ANNOTATED_CDS"/>
    <property type="molecule type" value="mRNA"/>
</dbReference>
<dbReference type="GlyGen" id="Q6ZWC4">
    <property type="glycosylation" value="1 site, 1 O-linked glycan (1 site)"/>
</dbReference>
<dbReference type="BioMuta" id="-"/>
<dbReference type="MassIVE" id="Q6ZWC4"/>
<dbReference type="neXtProt" id="NX_Q6ZWC4"/>
<dbReference type="InParanoid" id="Q6ZWC4"/>
<dbReference type="PAN-GO" id="Q6ZWC4">
    <property type="GO annotations" value="0 GO annotations based on evolutionary models"/>
</dbReference>
<dbReference type="Pharos" id="Q6ZWC4">
    <property type="development level" value="Tdark"/>
</dbReference>
<dbReference type="Proteomes" id="UP000005640">
    <property type="component" value="Unplaced"/>
</dbReference>
<dbReference type="RNAct" id="Q6ZWC4">
    <property type="molecule type" value="protein"/>
</dbReference>
<proteinExistence type="uncertain"/>
<keyword id="KW-1185">Reference proteome</keyword>
<feature type="chain" id="PRO_0000336095" description="Putative uncharacterized protein LOC100128429">
    <location>
        <begin position="1"/>
        <end position="215"/>
    </location>
</feature>
<feature type="region of interest" description="Disordered" evidence="1">
    <location>
        <begin position="120"/>
        <end position="147"/>
    </location>
</feature>
<reference key="1">
    <citation type="journal article" date="2004" name="Nat. Genet.">
        <title>Complete sequencing and characterization of 21,243 full-length human cDNAs.</title>
        <authorList>
            <person name="Ota T."/>
            <person name="Suzuki Y."/>
            <person name="Nishikawa T."/>
            <person name="Otsuki T."/>
            <person name="Sugiyama T."/>
            <person name="Irie R."/>
            <person name="Wakamatsu A."/>
            <person name="Hayashi K."/>
            <person name="Sato H."/>
            <person name="Nagai K."/>
            <person name="Kimura K."/>
            <person name="Makita H."/>
            <person name="Sekine M."/>
            <person name="Obayashi M."/>
            <person name="Nishi T."/>
            <person name="Shibahara T."/>
            <person name="Tanaka T."/>
            <person name="Ishii S."/>
            <person name="Yamamoto J."/>
            <person name="Saito K."/>
            <person name="Kawai Y."/>
            <person name="Isono Y."/>
            <person name="Nakamura Y."/>
            <person name="Nagahari K."/>
            <person name="Murakami K."/>
            <person name="Yasuda T."/>
            <person name="Iwayanagi T."/>
            <person name="Wagatsuma M."/>
            <person name="Shiratori A."/>
            <person name="Sudo H."/>
            <person name="Hosoiri T."/>
            <person name="Kaku Y."/>
            <person name="Kodaira H."/>
            <person name="Kondo H."/>
            <person name="Sugawara M."/>
            <person name="Takahashi M."/>
            <person name="Kanda K."/>
            <person name="Yokoi T."/>
            <person name="Furuya T."/>
            <person name="Kikkawa E."/>
            <person name="Omura Y."/>
            <person name="Abe K."/>
            <person name="Kamihara K."/>
            <person name="Katsuta N."/>
            <person name="Sato K."/>
            <person name="Tanikawa M."/>
            <person name="Yamazaki M."/>
            <person name="Ninomiya K."/>
            <person name="Ishibashi T."/>
            <person name="Yamashita H."/>
            <person name="Murakawa K."/>
            <person name="Fujimori K."/>
            <person name="Tanai H."/>
            <person name="Kimata M."/>
            <person name="Watanabe M."/>
            <person name="Hiraoka S."/>
            <person name="Chiba Y."/>
            <person name="Ishida S."/>
            <person name="Ono Y."/>
            <person name="Takiguchi S."/>
            <person name="Watanabe S."/>
            <person name="Yosida M."/>
            <person name="Hotuta T."/>
            <person name="Kusano J."/>
            <person name="Kanehori K."/>
            <person name="Takahashi-Fujii A."/>
            <person name="Hara H."/>
            <person name="Tanase T.-O."/>
            <person name="Nomura Y."/>
            <person name="Togiya S."/>
            <person name="Komai F."/>
            <person name="Hara R."/>
            <person name="Takeuchi K."/>
            <person name="Arita M."/>
            <person name="Imose N."/>
            <person name="Musashino K."/>
            <person name="Yuuki H."/>
            <person name="Oshima A."/>
            <person name="Sasaki N."/>
            <person name="Aotsuka S."/>
            <person name="Yoshikawa Y."/>
            <person name="Matsunawa H."/>
            <person name="Ichihara T."/>
            <person name="Shiohata N."/>
            <person name="Sano S."/>
            <person name="Moriya S."/>
            <person name="Momiyama H."/>
            <person name="Satoh N."/>
            <person name="Takami S."/>
            <person name="Terashima Y."/>
            <person name="Suzuki O."/>
            <person name="Nakagawa S."/>
            <person name="Senoh A."/>
            <person name="Mizoguchi H."/>
            <person name="Goto Y."/>
            <person name="Shimizu F."/>
            <person name="Wakebe H."/>
            <person name="Hishigaki H."/>
            <person name="Watanabe T."/>
            <person name="Sugiyama A."/>
            <person name="Takemoto M."/>
            <person name="Kawakami B."/>
            <person name="Yamazaki M."/>
            <person name="Watanabe K."/>
            <person name="Kumagai A."/>
            <person name="Itakura S."/>
            <person name="Fukuzumi Y."/>
            <person name="Fujimori Y."/>
            <person name="Komiyama M."/>
            <person name="Tashiro H."/>
            <person name="Tanigami A."/>
            <person name="Fujiwara T."/>
            <person name="Ono T."/>
            <person name="Yamada K."/>
            <person name="Fujii Y."/>
            <person name="Ozaki K."/>
            <person name="Hirao M."/>
            <person name="Ohmori Y."/>
            <person name="Kawabata A."/>
            <person name="Hikiji T."/>
            <person name="Kobatake N."/>
            <person name="Inagaki H."/>
            <person name="Ikema Y."/>
            <person name="Okamoto S."/>
            <person name="Okitani R."/>
            <person name="Kawakami T."/>
            <person name="Noguchi S."/>
            <person name="Itoh T."/>
            <person name="Shigeta K."/>
            <person name="Senba T."/>
            <person name="Matsumura K."/>
            <person name="Nakajima Y."/>
            <person name="Mizuno T."/>
            <person name="Morinaga M."/>
            <person name="Sasaki M."/>
            <person name="Togashi T."/>
            <person name="Oyama M."/>
            <person name="Hata H."/>
            <person name="Watanabe M."/>
            <person name="Komatsu T."/>
            <person name="Mizushima-Sugano J."/>
            <person name="Satoh T."/>
            <person name="Shirai Y."/>
            <person name="Takahashi Y."/>
            <person name="Nakagawa K."/>
            <person name="Okumura K."/>
            <person name="Nagase T."/>
            <person name="Nomura N."/>
            <person name="Kikuchi H."/>
            <person name="Masuho Y."/>
            <person name="Yamashita R."/>
            <person name="Nakai K."/>
            <person name="Yada T."/>
            <person name="Nakamura Y."/>
            <person name="Ohara O."/>
            <person name="Isogai T."/>
            <person name="Sugano S."/>
        </authorList>
    </citation>
    <scope>NUCLEOTIDE SEQUENCE [LARGE SCALE MRNA]</scope>
    <source>
        <tissue>Amygdala</tissue>
    </source>
</reference>
<name>YS043_HUMAN</name>
<organism>
    <name type="scientific">Homo sapiens</name>
    <name type="common">Human</name>
    <dbReference type="NCBI Taxonomy" id="9606"/>
    <lineage>
        <taxon>Eukaryota</taxon>
        <taxon>Metazoa</taxon>
        <taxon>Chordata</taxon>
        <taxon>Craniata</taxon>
        <taxon>Vertebrata</taxon>
        <taxon>Euteleostomi</taxon>
        <taxon>Mammalia</taxon>
        <taxon>Eutheria</taxon>
        <taxon>Euarchontoglires</taxon>
        <taxon>Primates</taxon>
        <taxon>Haplorrhini</taxon>
        <taxon>Catarrhini</taxon>
        <taxon>Hominidae</taxon>
        <taxon>Homo</taxon>
    </lineage>
</organism>
<protein>
    <recommendedName>
        <fullName>Putative uncharacterized protein LOC100128429</fullName>
    </recommendedName>
</protein>
<comment type="caution">
    <text evidence="2">Product of a dubious CDS prediction. No homolog. May not code for a protein.</text>
</comment>